<keyword id="KW-0119">Carbohydrate metabolism</keyword>
<keyword id="KW-0136">Cellulose degradation</keyword>
<keyword id="KW-0903">Direct protein sequencing</keyword>
<keyword id="KW-0326">Glycosidase</keyword>
<keyword id="KW-0378">Hydrolase</keyword>
<keyword id="KW-0624">Polysaccharide degradation</keyword>
<keyword id="KW-0732">Signal</keyword>
<comment type="function">
    <text>This enzyme catalyzes the endohydrolysis of 1,4-beta-glucosidic linkages in cellulose, lichenin and cereal beta-D-glucans.</text>
</comment>
<comment type="catalytic activity">
    <reaction>
        <text>Endohydrolysis of (1-&gt;4)-beta-D-glucosidic linkages in cellulose, lichenin and cereal beta-D-glucans.</text>
        <dbReference type="EC" id="3.2.1.4"/>
    </reaction>
</comment>
<comment type="pathway">
    <text>Glycan metabolism; cellulose degradation.</text>
</comment>
<comment type="PTM">
    <text>The signal sequence was not cleaved in the protein expressed in E.coli.</text>
</comment>
<comment type="similarity">
    <text evidence="3">Belongs to the glycosyl hydrolase 5 (cellulase A) family.</text>
</comment>
<accession>P23340</accession>
<gene>
    <name type="primary">celC307</name>
</gene>
<evidence type="ECO:0000250" key="1"/>
<evidence type="ECO:0000255" key="2"/>
<evidence type="ECO:0000305" key="3"/>
<protein>
    <recommendedName>
        <fullName>Endoglucanase C307</fullName>
        <ecNumber>3.2.1.4</ecNumber>
    </recommendedName>
    <alternativeName>
        <fullName>Cellulase C307</fullName>
    </alternativeName>
    <alternativeName>
        <fullName>Endo-1,4-beta-glucanase C307</fullName>
    </alternativeName>
</protein>
<feature type="signal peptide" evidence="2">
    <location>
        <begin position="1"/>
        <end position="21"/>
    </location>
</feature>
<feature type="chain" id="PRO_0000007851" description="Endoglucanase C307">
    <location>
        <begin position="22"/>
        <end position="343"/>
    </location>
</feature>
<feature type="active site" description="Proton donor" evidence="1">
    <location>
        <position position="140"/>
    </location>
</feature>
<feature type="active site" description="Nucleophile" evidence="1">
    <location>
        <position position="280"/>
    </location>
</feature>
<dbReference type="EC" id="3.2.1.4"/>
<dbReference type="EMBL" id="D00945">
    <property type="protein sequence ID" value="BAA00793.1"/>
    <property type="molecule type" value="Genomic_DNA"/>
</dbReference>
<dbReference type="PIR" id="JE0409">
    <property type="entry name" value="JE0409"/>
</dbReference>
<dbReference type="SMR" id="P23340"/>
<dbReference type="DrugBank" id="DB02379">
    <property type="generic name" value="Beta-D-Glucose"/>
</dbReference>
<dbReference type="CAZy" id="GH5">
    <property type="family name" value="Glycoside Hydrolase Family 5"/>
</dbReference>
<dbReference type="UniPathway" id="UPA00696"/>
<dbReference type="GO" id="GO:0009986">
    <property type="term" value="C:cell surface"/>
    <property type="evidence" value="ECO:0007669"/>
    <property type="project" value="TreeGrafter"/>
</dbReference>
<dbReference type="GO" id="GO:0005576">
    <property type="term" value="C:extracellular region"/>
    <property type="evidence" value="ECO:0007669"/>
    <property type="project" value="TreeGrafter"/>
</dbReference>
<dbReference type="GO" id="GO:0008422">
    <property type="term" value="F:beta-glucosidase activity"/>
    <property type="evidence" value="ECO:0007669"/>
    <property type="project" value="TreeGrafter"/>
</dbReference>
<dbReference type="GO" id="GO:0008810">
    <property type="term" value="F:cellulase activity"/>
    <property type="evidence" value="ECO:0007669"/>
    <property type="project" value="UniProtKB-EC"/>
</dbReference>
<dbReference type="GO" id="GO:0030245">
    <property type="term" value="P:cellulose catabolic process"/>
    <property type="evidence" value="ECO:0007669"/>
    <property type="project" value="UniProtKB-UniPathway"/>
</dbReference>
<dbReference type="Gene3D" id="3.20.20.80">
    <property type="entry name" value="Glycosidases"/>
    <property type="match status" value="1"/>
</dbReference>
<dbReference type="InterPro" id="IPR001547">
    <property type="entry name" value="Glyco_hydro_5"/>
</dbReference>
<dbReference type="InterPro" id="IPR018087">
    <property type="entry name" value="Glyco_hydro_5_CS"/>
</dbReference>
<dbReference type="InterPro" id="IPR017853">
    <property type="entry name" value="Glycoside_hydrolase_SF"/>
</dbReference>
<dbReference type="InterPro" id="IPR050386">
    <property type="entry name" value="Glycosyl_hydrolase_5"/>
</dbReference>
<dbReference type="PANTHER" id="PTHR31297:SF41">
    <property type="entry name" value="ENDOGLUCANASE, PUTATIVE (AFU_ORTHOLOGUE AFUA_5G01830)-RELATED"/>
    <property type="match status" value="1"/>
</dbReference>
<dbReference type="PANTHER" id="PTHR31297">
    <property type="entry name" value="GLUCAN ENDO-1,6-BETA-GLUCOSIDASE B"/>
    <property type="match status" value="1"/>
</dbReference>
<dbReference type="Pfam" id="PF00150">
    <property type="entry name" value="Cellulase"/>
    <property type="match status" value="1"/>
</dbReference>
<dbReference type="SUPFAM" id="SSF51445">
    <property type="entry name" value="(Trans)glycosidases"/>
    <property type="match status" value="1"/>
</dbReference>
<dbReference type="PROSITE" id="PS00659">
    <property type="entry name" value="GLYCOSYL_HYDROL_F5"/>
    <property type="match status" value="1"/>
</dbReference>
<name>GUNC_CLOSF</name>
<proteinExistence type="evidence at protein level"/>
<reference key="1">
    <citation type="journal article" date="1991" name="Agric. Biol. Chem.">
        <title>Nucleotide sequence of celC307 encoding endoglucanase C307 of Clostridium sp. strain F1.</title>
        <authorList>
            <person name="Sakka K."/>
            <person name="Shimanuki T."/>
            <person name="Shimada K."/>
        </authorList>
    </citation>
    <scope>NUCLEOTIDE SEQUENCE [GENOMIC DNA]</scope>
    <scope>PROTEIN SEQUENCE OF 1-19 (PRECURSOR PROTEIN)</scope>
</reference>
<sequence>MVSFKAGINLGGWISQYQVFSKEHFDTFITEKDIETIAEAGFDHVRLPFDYPIIESDDNVGEYKEDGLSYIDRCLEWCKKYNLGLVLDMHHAPGYRFQDFKTSTLFEDPNQQKRFVDIWRFLAKRYINEREHIAFELLNEVVEPDSTRWNKLMLECVKAIREIDSTRWLYIGGNNYNSPDELKNLADIDDDYIVYNFHFYNPFFFTHQKAHWSESAMAYNRTVKYPGQYEGIEEFVKNNPKYSFMMELNNLKLNKELLRKDLKPAIEFREKKKCKLYCGEFGVIAIADLESRIKWHEDYISLLEEYDIGGAVWNYKKMDFEIYNEDRKPVSQELVNILARRKT</sequence>
<organism>
    <name type="scientific">Clostridium sp. (strain F1)</name>
    <dbReference type="NCBI Taxonomy" id="1508"/>
    <lineage>
        <taxon>Bacteria</taxon>
        <taxon>Bacillati</taxon>
        <taxon>Bacillota</taxon>
        <taxon>Clostridia</taxon>
        <taxon>Eubacteriales</taxon>
        <taxon>Clostridiaceae</taxon>
        <taxon>Clostridium</taxon>
    </lineage>
</organism>